<dbReference type="EMBL" id="CP000254">
    <property type="protein sequence ID" value="ABD41942.1"/>
    <property type="molecule type" value="Genomic_DNA"/>
</dbReference>
<dbReference type="RefSeq" id="WP_011449200.1">
    <property type="nucleotide sequence ID" value="NC_007796.1"/>
</dbReference>
<dbReference type="SMR" id="Q2FSG5"/>
<dbReference type="FunCoup" id="Q2FSG5">
    <property type="interactions" value="138"/>
</dbReference>
<dbReference type="STRING" id="323259.Mhun_2237"/>
<dbReference type="EnsemblBacteria" id="ABD41942">
    <property type="protein sequence ID" value="ABD41942"/>
    <property type="gene ID" value="Mhun_2237"/>
</dbReference>
<dbReference type="GeneID" id="3924105"/>
<dbReference type="KEGG" id="mhu:Mhun_2237"/>
<dbReference type="eggNOG" id="arCOG04090">
    <property type="taxonomic scope" value="Archaea"/>
</dbReference>
<dbReference type="HOGENOM" id="CLU_065464_0_0_2"/>
<dbReference type="InParanoid" id="Q2FSG5"/>
<dbReference type="OrthoDB" id="7144at2157"/>
<dbReference type="Proteomes" id="UP000001941">
    <property type="component" value="Chromosome"/>
</dbReference>
<dbReference type="GO" id="GO:0022625">
    <property type="term" value="C:cytosolic large ribosomal subunit"/>
    <property type="evidence" value="ECO:0007669"/>
    <property type="project" value="TreeGrafter"/>
</dbReference>
<dbReference type="GO" id="GO:0019843">
    <property type="term" value="F:rRNA binding"/>
    <property type="evidence" value="ECO:0007669"/>
    <property type="project" value="UniProtKB-UniRule"/>
</dbReference>
<dbReference type="GO" id="GO:0003735">
    <property type="term" value="F:structural constituent of ribosome"/>
    <property type="evidence" value="ECO:0007669"/>
    <property type="project" value="InterPro"/>
</dbReference>
<dbReference type="GO" id="GO:0002181">
    <property type="term" value="P:cytoplasmic translation"/>
    <property type="evidence" value="ECO:0007669"/>
    <property type="project" value="TreeGrafter"/>
</dbReference>
<dbReference type="FunFam" id="3.90.930.12:FF:000008">
    <property type="entry name" value="50S ribosomal protein L6"/>
    <property type="match status" value="1"/>
</dbReference>
<dbReference type="Gene3D" id="3.90.930.12">
    <property type="entry name" value="Ribosomal protein L6, alpha-beta domain"/>
    <property type="match status" value="2"/>
</dbReference>
<dbReference type="HAMAP" id="MF_01365_A">
    <property type="entry name" value="Ribosomal_uL6_A"/>
    <property type="match status" value="1"/>
</dbReference>
<dbReference type="InterPro" id="IPR000702">
    <property type="entry name" value="Ribosomal_uL6-like"/>
</dbReference>
<dbReference type="InterPro" id="IPR036789">
    <property type="entry name" value="Ribosomal_uL6-like_a/b-dom_sf"/>
</dbReference>
<dbReference type="InterPro" id="IPR020040">
    <property type="entry name" value="Ribosomal_uL6_a/b-dom"/>
</dbReference>
<dbReference type="InterPro" id="IPR019907">
    <property type="entry name" value="Ribosomal_uL6_arc"/>
</dbReference>
<dbReference type="NCBIfam" id="NF004037">
    <property type="entry name" value="PRK05518.1"/>
    <property type="match status" value="1"/>
</dbReference>
<dbReference type="NCBIfam" id="TIGR03653">
    <property type="entry name" value="uL6_arch"/>
    <property type="match status" value="1"/>
</dbReference>
<dbReference type="PANTHER" id="PTHR11655:SF16">
    <property type="entry name" value="60S RIBOSOMAL PROTEIN L9"/>
    <property type="match status" value="1"/>
</dbReference>
<dbReference type="PANTHER" id="PTHR11655">
    <property type="entry name" value="60S/50S RIBOSOMAL PROTEIN L6/L9"/>
    <property type="match status" value="1"/>
</dbReference>
<dbReference type="Pfam" id="PF00347">
    <property type="entry name" value="Ribosomal_L6"/>
    <property type="match status" value="2"/>
</dbReference>
<dbReference type="PIRSF" id="PIRSF002162">
    <property type="entry name" value="Ribosomal_L6"/>
    <property type="match status" value="1"/>
</dbReference>
<dbReference type="SUPFAM" id="SSF56053">
    <property type="entry name" value="Ribosomal protein L6"/>
    <property type="match status" value="2"/>
</dbReference>
<reference key="1">
    <citation type="journal article" date="2016" name="Stand. Genomic Sci.">
        <title>Complete genome sequence of Methanospirillum hungatei type strain JF1.</title>
        <authorList>
            <person name="Gunsalus R.P."/>
            <person name="Cook L.E."/>
            <person name="Crable B."/>
            <person name="Rohlin L."/>
            <person name="McDonald E."/>
            <person name="Mouttaki H."/>
            <person name="Sieber J.R."/>
            <person name="Poweleit N."/>
            <person name="Zhou H."/>
            <person name="Lapidus A.L."/>
            <person name="Daligault H.E."/>
            <person name="Land M."/>
            <person name="Gilna P."/>
            <person name="Ivanova N."/>
            <person name="Kyrpides N."/>
            <person name="Culley D.E."/>
            <person name="McInerney M.J."/>
        </authorList>
    </citation>
    <scope>NUCLEOTIDE SEQUENCE [LARGE SCALE GENOMIC DNA]</scope>
    <source>
        <strain>ATCC 27890 / DSM 864 / NBRC 100397 / JF-1</strain>
    </source>
</reference>
<name>RL6_METHJ</name>
<evidence type="ECO:0000255" key="1">
    <source>
        <dbReference type="HAMAP-Rule" id="MF_01365"/>
    </source>
</evidence>
<evidence type="ECO:0000305" key="2"/>
<protein>
    <recommendedName>
        <fullName evidence="1">Large ribosomal subunit protein uL6</fullName>
    </recommendedName>
    <alternativeName>
        <fullName evidence="2">50S ribosomal protein L6</fullName>
    </alternativeName>
</protein>
<organism>
    <name type="scientific">Methanospirillum hungatei JF-1 (strain ATCC 27890 / DSM 864 / NBRC 100397 / JF-1)</name>
    <dbReference type="NCBI Taxonomy" id="323259"/>
    <lineage>
        <taxon>Archaea</taxon>
        <taxon>Methanobacteriati</taxon>
        <taxon>Methanobacteriota</taxon>
        <taxon>Stenosarchaea group</taxon>
        <taxon>Methanomicrobia</taxon>
        <taxon>Methanomicrobiales</taxon>
        <taxon>Methanospirillaceae</taxon>
        <taxon>Methanospirillum</taxon>
    </lineage>
</organism>
<keyword id="KW-1185">Reference proteome</keyword>
<keyword id="KW-0687">Ribonucleoprotein</keyword>
<keyword id="KW-0689">Ribosomal protein</keyword>
<keyword id="KW-0694">RNA-binding</keyword>
<keyword id="KW-0699">rRNA-binding</keyword>
<feature type="chain" id="PRO_0000260991" description="Large ribosomal subunit protein uL6">
    <location>
        <begin position="1"/>
        <end position="176"/>
    </location>
</feature>
<accession>Q2FSG5</accession>
<sequence>MTVERVVSIPSGVSVTMDGTVLHVKGPKGNLQRDMWYPGIEITIGSEDVRFTTESQKKAVTSMVGTLASHCSNMCTGVTKGYLYSMKVVYSHFPIQIKVVGETLEIVNFLGEKYPRSARILPGTTVKVGSDEVTVTGIDKEVVGSTAANIERATRIRDRDPRVFQDGIYIVSRSEQ</sequence>
<gene>
    <name evidence="1" type="primary">rpl6</name>
    <name type="ordered locus">Mhun_2237</name>
</gene>
<proteinExistence type="inferred from homology"/>
<comment type="function">
    <text evidence="1">This protein binds to the 23S rRNA, and is important in its secondary structure. It is located near the subunit interface in the base of the L7/L12 stalk, and near the tRNA binding site of the peptidyltransferase center.</text>
</comment>
<comment type="subunit">
    <text evidence="1">Part of the 50S ribosomal subunit.</text>
</comment>
<comment type="similarity">
    <text evidence="1">Belongs to the universal ribosomal protein uL6 family.</text>
</comment>